<protein>
    <recommendedName>
        <fullName evidence="1">Large ribosomal subunit protein uL5</fullName>
    </recommendedName>
    <alternativeName>
        <fullName evidence="2">50S ribosomal protein L5</fullName>
    </alternativeName>
</protein>
<reference key="1">
    <citation type="journal article" date="2010" name="Genome Biol.">
        <title>Structure and dynamics of the pan-genome of Streptococcus pneumoniae and closely related species.</title>
        <authorList>
            <person name="Donati C."/>
            <person name="Hiller N.L."/>
            <person name="Tettelin H."/>
            <person name="Muzzi A."/>
            <person name="Croucher N.J."/>
            <person name="Angiuoli S.V."/>
            <person name="Oggioni M."/>
            <person name="Dunning Hotopp J.C."/>
            <person name="Hu F.Z."/>
            <person name="Riley D.R."/>
            <person name="Covacci A."/>
            <person name="Mitchell T.J."/>
            <person name="Bentley S.D."/>
            <person name="Kilian M."/>
            <person name="Ehrlich G.D."/>
            <person name="Rappuoli R."/>
            <person name="Moxon E.R."/>
            <person name="Masignani V."/>
        </authorList>
    </citation>
    <scope>NUCLEOTIDE SEQUENCE [LARGE SCALE GENOMIC DNA]</scope>
    <source>
        <strain>70585</strain>
    </source>
</reference>
<proteinExistence type="inferred from homology"/>
<evidence type="ECO:0000255" key="1">
    <source>
        <dbReference type="HAMAP-Rule" id="MF_01333"/>
    </source>
</evidence>
<evidence type="ECO:0000305" key="2"/>
<sequence>MANRLKEKYLNEVVPALTEQFNYSSVMAVPKVDKIVLNMGVGEAVSNAKSLEKAAEELALISGQKPLITKAKKSIAGFRLREGVAIGAKVTLRGERMYEFLDKLVSVSLPRVRDFHGVPTKSFDGRGNYTLGVKEQLIFPEINFDDVDKTRGLDIVIVTTANTDEESRALLTGLGMPFAK</sequence>
<dbReference type="EMBL" id="CP000918">
    <property type="protein sequence ID" value="ACO16548.1"/>
    <property type="molecule type" value="Genomic_DNA"/>
</dbReference>
<dbReference type="RefSeq" id="WP_000013542.1">
    <property type="nucleotide sequence ID" value="NC_012468.1"/>
</dbReference>
<dbReference type="SMR" id="C1CAM4"/>
<dbReference type="GeneID" id="93738969"/>
<dbReference type="KEGG" id="snm:SP70585_0277"/>
<dbReference type="HOGENOM" id="CLU_061015_2_1_9"/>
<dbReference type="Proteomes" id="UP000002211">
    <property type="component" value="Chromosome"/>
</dbReference>
<dbReference type="GO" id="GO:1990904">
    <property type="term" value="C:ribonucleoprotein complex"/>
    <property type="evidence" value="ECO:0007669"/>
    <property type="project" value="UniProtKB-KW"/>
</dbReference>
<dbReference type="GO" id="GO:0005840">
    <property type="term" value="C:ribosome"/>
    <property type="evidence" value="ECO:0007669"/>
    <property type="project" value="UniProtKB-KW"/>
</dbReference>
<dbReference type="GO" id="GO:0019843">
    <property type="term" value="F:rRNA binding"/>
    <property type="evidence" value="ECO:0007669"/>
    <property type="project" value="UniProtKB-UniRule"/>
</dbReference>
<dbReference type="GO" id="GO:0003735">
    <property type="term" value="F:structural constituent of ribosome"/>
    <property type="evidence" value="ECO:0007669"/>
    <property type="project" value="InterPro"/>
</dbReference>
<dbReference type="GO" id="GO:0000049">
    <property type="term" value="F:tRNA binding"/>
    <property type="evidence" value="ECO:0007669"/>
    <property type="project" value="UniProtKB-UniRule"/>
</dbReference>
<dbReference type="GO" id="GO:0006412">
    <property type="term" value="P:translation"/>
    <property type="evidence" value="ECO:0007669"/>
    <property type="project" value="UniProtKB-UniRule"/>
</dbReference>
<dbReference type="FunFam" id="3.30.1440.10:FF:000001">
    <property type="entry name" value="50S ribosomal protein L5"/>
    <property type="match status" value="1"/>
</dbReference>
<dbReference type="Gene3D" id="3.30.1440.10">
    <property type="match status" value="1"/>
</dbReference>
<dbReference type="HAMAP" id="MF_01333_B">
    <property type="entry name" value="Ribosomal_uL5_B"/>
    <property type="match status" value="1"/>
</dbReference>
<dbReference type="InterPro" id="IPR002132">
    <property type="entry name" value="Ribosomal_uL5"/>
</dbReference>
<dbReference type="InterPro" id="IPR020930">
    <property type="entry name" value="Ribosomal_uL5_bac-type"/>
</dbReference>
<dbReference type="InterPro" id="IPR031309">
    <property type="entry name" value="Ribosomal_uL5_C"/>
</dbReference>
<dbReference type="InterPro" id="IPR020929">
    <property type="entry name" value="Ribosomal_uL5_CS"/>
</dbReference>
<dbReference type="InterPro" id="IPR022803">
    <property type="entry name" value="Ribosomal_uL5_dom_sf"/>
</dbReference>
<dbReference type="InterPro" id="IPR031310">
    <property type="entry name" value="Ribosomal_uL5_N"/>
</dbReference>
<dbReference type="NCBIfam" id="NF000585">
    <property type="entry name" value="PRK00010.1"/>
    <property type="match status" value="1"/>
</dbReference>
<dbReference type="PANTHER" id="PTHR11994">
    <property type="entry name" value="60S RIBOSOMAL PROTEIN L11-RELATED"/>
    <property type="match status" value="1"/>
</dbReference>
<dbReference type="Pfam" id="PF00281">
    <property type="entry name" value="Ribosomal_L5"/>
    <property type="match status" value="1"/>
</dbReference>
<dbReference type="Pfam" id="PF00673">
    <property type="entry name" value="Ribosomal_L5_C"/>
    <property type="match status" value="1"/>
</dbReference>
<dbReference type="PIRSF" id="PIRSF002161">
    <property type="entry name" value="Ribosomal_L5"/>
    <property type="match status" value="1"/>
</dbReference>
<dbReference type="SUPFAM" id="SSF55282">
    <property type="entry name" value="RL5-like"/>
    <property type="match status" value="1"/>
</dbReference>
<dbReference type="PROSITE" id="PS00358">
    <property type="entry name" value="RIBOSOMAL_L5"/>
    <property type="match status" value="1"/>
</dbReference>
<keyword id="KW-0687">Ribonucleoprotein</keyword>
<keyword id="KW-0689">Ribosomal protein</keyword>
<keyword id="KW-0694">RNA-binding</keyword>
<keyword id="KW-0699">rRNA-binding</keyword>
<keyword id="KW-0820">tRNA-binding</keyword>
<comment type="function">
    <text evidence="1">This is one of the proteins that bind and probably mediate the attachment of the 5S RNA into the large ribosomal subunit, where it forms part of the central protuberance. In the 70S ribosome it contacts protein S13 of the 30S subunit (bridge B1b), connecting the 2 subunits; this bridge is implicated in subunit movement. Contacts the P site tRNA; the 5S rRNA and some of its associated proteins might help stabilize positioning of ribosome-bound tRNAs.</text>
</comment>
<comment type="subunit">
    <text evidence="1">Part of the 50S ribosomal subunit; part of the 5S rRNA/L5/L18/L25 subcomplex. Contacts the 5S rRNA and the P site tRNA. Forms a bridge to the 30S subunit in the 70S ribosome.</text>
</comment>
<comment type="similarity">
    <text evidence="1">Belongs to the universal ribosomal protein uL5 family.</text>
</comment>
<name>RL5_STRP7</name>
<gene>
    <name evidence="1" type="primary">rplE</name>
    <name type="ordered locus">SP70585_0277</name>
</gene>
<feature type="chain" id="PRO_1000166150" description="Large ribosomal subunit protein uL5">
    <location>
        <begin position="1"/>
        <end position="180"/>
    </location>
</feature>
<organism>
    <name type="scientific">Streptococcus pneumoniae (strain 70585)</name>
    <dbReference type="NCBI Taxonomy" id="488221"/>
    <lineage>
        <taxon>Bacteria</taxon>
        <taxon>Bacillati</taxon>
        <taxon>Bacillota</taxon>
        <taxon>Bacilli</taxon>
        <taxon>Lactobacillales</taxon>
        <taxon>Streptococcaceae</taxon>
        <taxon>Streptococcus</taxon>
    </lineage>
</organism>
<accession>C1CAM4</accession>